<name>LEPA_FUSNN</name>
<feature type="chain" id="PRO_0000176276" description="Elongation factor 4">
    <location>
        <begin position="1"/>
        <end position="604"/>
    </location>
</feature>
<feature type="domain" description="tr-type G">
    <location>
        <begin position="8"/>
        <end position="190"/>
    </location>
</feature>
<feature type="binding site" evidence="1">
    <location>
        <begin position="20"/>
        <end position="25"/>
    </location>
    <ligand>
        <name>GTP</name>
        <dbReference type="ChEBI" id="CHEBI:37565"/>
    </ligand>
</feature>
<feature type="binding site" evidence="1">
    <location>
        <begin position="137"/>
        <end position="140"/>
    </location>
    <ligand>
        <name>GTP</name>
        <dbReference type="ChEBI" id="CHEBI:37565"/>
    </ligand>
</feature>
<reference key="1">
    <citation type="journal article" date="2002" name="J. Bacteriol.">
        <title>Genome sequence and analysis of the oral bacterium Fusobacterium nucleatum strain ATCC 25586.</title>
        <authorList>
            <person name="Kapatral V."/>
            <person name="Anderson I."/>
            <person name="Ivanova N."/>
            <person name="Reznik G."/>
            <person name="Los T."/>
            <person name="Lykidis A."/>
            <person name="Bhattacharyya A."/>
            <person name="Bartman A."/>
            <person name="Gardner W."/>
            <person name="Grechkin G."/>
            <person name="Zhu L."/>
            <person name="Vasieva O."/>
            <person name="Chu L."/>
            <person name="Kogan Y."/>
            <person name="Chaga O."/>
            <person name="Goltsman E."/>
            <person name="Bernal A."/>
            <person name="Larsen N."/>
            <person name="D'Souza M."/>
            <person name="Walunas T."/>
            <person name="Pusch G."/>
            <person name="Haselkorn R."/>
            <person name="Fonstein M."/>
            <person name="Kyrpides N.C."/>
            <person name="Overbeek R."/>
        </authorList>
    </citation>
    <scope>NUCLEOTIDE SEQUENCE [LARGE SCALE GENOMIC DNA]</scope>
    <source>
        <strain>ATCC 25586 / DSM 15643 / BCRC 10681 / CIP 101130 / JCM 8532 / KCTC 2640 / LMG 13131 / VPI 4355</strain>
    </source>
</reference>
<protein>
    <recommendedName>
        <fullName evidence="1">Elongation factor 4</fullName>
        <shortName evidence="1">EF-4</shortName>
        <ecNumber evidence="1">3.6.5.n1</ecNumber>
    </recommendedName>
    <alternativeName>
        <fullName evidence="1">Ribosomal back-translocase LepA</fullName>
    </alternativeName>
</protein>
<gene>
    <name evidence="1" type="primary">lepA</name>
    <name type="ordered locus">FN0777</name>
</gene>
<proteinExistence type="inferred from homology"/>
<sequence length="604" mass="67716">MEAIMLQKNKRNFSIIAHIDHGKSTIADRLLEYTGTVSERDMKEQILDSMDLEREKGITIKAQAVTLFYKAKNGEEYELNLIDTPGHVDFIYEVSRSLAACEGALLVVDAAQGVEAQTLANVYLAIENNLEILPIINKIDLPAAEPEKVKREIEDIIGLPADDAVLASAKNGIGIEDILEAIVHRIPAPNYDEDAPLKALIFDSYFDDYRGVITYVKVLDGNIKKGDKIKIWSTEKELEVLEAGIFSPTMKSTDILSTGSVGYIITGVKTIHDTRVGDTITSVKNPALFPLAGFKPAQSMVFAGVYPLFTDDYEELREALEKLQLNDASLTFVPETSIALGFGFRCGFLGLLHMEIIVERLRREYNIDLISTTPSVEYKVSIDNQEEKVIDNPCEFPDPGRGKITIQEPYIRGKVIVPKEYVGNVMELCQEKRGIFISMDYLDETRSMLSYELPLAEIVIDFYDKLKSRTKGYASFEYELSEYKISNLVKVDILVSGKPVDAFSFIAHNDNAFHRGKAICQKLSEVIPRQQFEIPIQAALGSKIIARETIKAYRKNVIAKCYGGDITRKKKLLEKQKEGKKRMKSIGNVEIPQEAFVSVLKLND</sequence>
<organism>
    <name type="scientific">Fusobacterium nucleatum subsp. nucleatum (strain ATCC 25586 / DSM 15643 / BCRC 10681 / CIP 101130 / JCM 8532 / KCTC 2640 / LMG 13131 / VPI 4355)</name>
    <dbReference type="NCBI Taxonomy" id="190304"/>
    <lineage>
        <taxon>Bacteria</taxon>
        <taxon>Fusobacteriati</taxon>
        <taxon>Fusobacteriota</taxon>
        <taxon>Fusobacteriia</taxon>
        <taxon>Fusobacteriales</taxon>
        <taxon>Fusobacteriaceae</taxon>
        <taxon>Fusobacterium</taxon>
    </lineage>
</organism>
<dbReference type="EC" id="3.6.5.n1" evidence="1"/>
<dbReference type="EMBL" id="AE009951">
    <property type="protein sequence ID" value="AAL94973.1"/>
    <property type="molecule type" value="Genomic_DNA"/>
</dbReference>
<dbReference type="RefSeq" id="NP_603674.1">
    <property type="nucleotide sequence ID" value="NC_003454.1"/>
</dbReference>
<dbReference type="SMR" id="Q8RFD1"/>
<dbReference type="FunCoup" id="Q8RFD1">
    <property type="interactions" value="360"/>
</dbReference>
<dbReference type="STRING" id="190304.FN0777"/>
<dbReference type="PaxDb" id="190304-FN0777"/>
<dbReference type="EnsemblBacteria" id="AAL94973">
    <property type="protein sequence ID" value="AAL94973"/>
    <property type="gene ID" value="FN0777"/>
</dbReference>
<dbReference type="KEGG" id="fnu:FN0777"/>
<dbReference type="PATRIC" id="fig|190304.8.peg.1340"/>
<dbReference type="eggNOG" id="COG0481">
    <property type="taxonomic scope" value="Bacteria"/>
</dbReference>
<dbReference type="HOGENOM" id="CLU_009995_3_3_0"/>
<dbReference type="InParanoid" id="Q8RFD1"/>
<dbReference type="BioCyc" id="FNUC190304:G1FZS-1362-MONOMER"/>
<dbReference type="Proteomes" id="UP000002521">
    <property type="component" value="Chromosome"/>
</dbReference>
<dbReference type="GO" id="GO:0005886">
    <property type="term" value="C:plasma membrane"/>
    <property type="evidence" value="ECO:0007669"/>
    <property type="project" value="UniProtKB-SubCell"/>
</dbReference>
<dbReference type="GO" id="GO:0005525">
    <property type="term" value="F:GTP binding"/>
    <property type="evidence" value="ECO:0007669"/>
    <property type="project" value="UniProtKB-UniRule"/>
</dbReference>
<dbReference type="GO" id="GO:0003924">
    <property type="term" value="F:GTPase activity"/>
    <property type="evidence" value="ECO:0007669"/>
    <property type="project" value="UniProtKB-UniRule"/>
</dbReference>
<dbReference type="GO" id="GO:0043022">
    <property type="term" value="F:ribosome binding"/>
    <property type="evidence" value="ECO:0000318"/>
    <property type="project" value="GO_Central"/>
</dbReference>
<dbReference type="GO" id="GO:0003746">
    <property type="term" value="F:translation elongation factor activity"/>
    <property type="evidence" value="ECO:0007669"/>
    <property type="project" value="UniProtKB-UniRule"/>
</dbReference>
<dbReference type="GO" id="GO:0045727">
    <property type="term" value="P:positive regulation of translation"/>
    <property type="evidence" value="ECO:0000318"/>
    <property type="project" value="GO_Central"/>
</dbReference>
<dbReference type="CDD" id="cd03699">
    <property type="entry name" value="EF4_II"/>
    <property type="match status" value="1"/>
</dbReference>
<dbReference type="CDD" id="cd16260">
    <property type="entry name" value="EF4_III"/>
    <property type="match status" value="1"/>
</dbReference>
<dbReference type="CDD" id="cd01890">
    <property type="entry name" value="LepA"/>
    <property type="match status" value="1"/>
</dbReference>
<dbReference type="CDD" id="cd03709">
    <property type="entry name" value="lepA_C"/>
    <property type="match status" value="1"/>
</dbReference>
<dbReference type="FunFam" id="3.40.50.300:FF:000078">
    <property type="entry name" value="Elongation factor 4"/>
    <property type="match status" value="1"/>
</dbReference>
<dbReference type="FunFam" id="2.40.30.10:FF:000015">
    <property type="entry name" value="Translation factor GUF1, mitochondrial"/>
    <property type="match status" value="1"/>
</dbReference>
<dbReference type="FunFam" id="3.30.70.240:FF:000007">
    <property type="entry name" value="Translation factor GUF1, mitochondrial"/>
    <property type="match status" value="1"/>
</dbReference>
<dbReference type="FunFam" id="3.30.70.2570:FF:000001">
    <property type="entry name" value="Translation factor GUF1, mitochondrial"/>
    <property type="match status" value="1"/>
</dbReference>
<dbReference type="FunFam" id="3.30.70.870:FF:000004">
    <property type="entry name" value="Translation factor GUF1, mitochondrial"/>
    <property type="match status" value="1"/>
</dbReference>
<dbReference type="Gene3D" id="3.30.70.240">
    <property type="match status" value="1"/>
</dbReference>
<dbReference type="Gene3D" id="3.30.70.2570">
    <property type="entry name" value="Elongation factor 4, C-terminal domain"/>
    <property type="match status" value="1"/>
</dbReference>
<dbReference type="Gene3D" id="3.30.70.870">
    <property type="entry name" value="Elongation Factor G (Translational Gtpase), domain 3"/>
    <property type="match status" value="1"/>
</dbReference>
<dbReference type="Gene3D" id="3.40.50.300">
    <property type="entry name" value="P-loop containing nucleotide triphosphate hydrolases"/>
    <property type="match status" value="1"/>
</dbReference>
<dbReference type="Gene3D" id="2.40.30.10">
    <property type="entry name" value="Translation factors"/>
    <property type="match status" value="1"/>
</dbReference>
<dbReference type="HAMAP" id="MF_00071">
    <property type="entry name" value="LepA"/>
    <property type="match status" value="1"/>
</dbReference>
<dbReference type="InterPro" id="IPR006297">
    <property type="entry name" value="EF-4"/>
</dbReference>
<dbReference type="InterPro" id="IPR035647">
    <property type="entry name" value="EFG_III/V"/>
</dbReference>
<dbReference type="InterPro" id="IPR000640">
    <property type="entry name" value="EFG_V-like"/>
</dbReference>
<dbReference type="InterPro" id="IPR004161">
    <property type="entry name" value="EFTu-like_2"/>
</dbReference>
<dbReference type="InterPro" id="IPR031157">
    <property type="entry name" value="G_TR_CS"/>
</dbReference>
<dbReference type="InterPro" id="IPR038363">
    <property type="entry name" value="LepA_C_sf"/>
</dbReference>
<dbReference type="InterPro" id="IPR013842">
    <property type="entry name" value="LepA_CTD"/>
</dbReference>
<dbReference type="InterPro" id="IPR035654">
    <property type="entry name" value="LepA_IV"/>
</dbReference>
<dbReference type="InterPro" id="IPR027417">
    <property type="entry name" value="P-loop_NTPase"/>
</dbReference>
<dbReference type="InterPro" id="IPR005225">
    <property type="entry name" value="Small_GTP-bd"/>
</dbReference>
<dbReference type="InterPro" id="IPR000795">
    <property type="entry name" value="T_Tr_GTP-bd_dom"/>
</dbReference>
<dbReference type="NCBIfam" id="TIGR01393">
    <property type="entry name" value="lepA"/>
    <property type="match status" value="1"/>
</dbReference>
<dbReference type="NCBIfam" id="TIGR00231">
    <property type="entry name" value="small_GTP"/>
    <property type="match status" value="1"/>
</dbReference>
<dbReference type="PANTHER" id="PTHR43512:SF4">
    <property type="entry name" value="TRANSLATION FACTOR GUF1 HOMOLOG, CHLOROPLASTIC"/>
    <property type="match status" value="1"/>
</dbReference>
<dbReference type="PANTHER" id="PTHR43512">
    <property type="entry name" value="TRANSLATION FACTOR GUF1-RELATED"/>
    <property type="match status" value="1"/>
</dbReference>
<dbReference type="Pfam" id="PF00679">
    <property type="entry name" value="EFG_C"/>
    <property type="match status" value="1"/>
</dbReference>
<dbReference type="Pfam" id="PF00009">
    <property type="entry name" value="GTP_EFTU"/>
    <property type="match status" value="1"/>
</dbReference>
<dbReference type="Pfam" id="PF03144">
    <property type="entry name" value="GTP_EFTU_D2"/>
    <property type="match status" value="1"/>
</dbReference>
<dbReference type="Pfam" id="PF06421">
    <property type="entry name" value="LepA_C"/>
    <property type="match status" value="1"/>
</dbReference>
<dbReference type="PRINTS" id="PR00315">
    <property type="entry name" value="ELONGATNFCT"/>
</dbReference>
<dbReference type="SMART" id="SM00838">
    <property type="entry name" value="EFG_C"/>
    <property type="match status" value="1"/>
</dbReference>
<dbReference type="SUPFAM" id="SSF54980">
    <property type="entry name" value="EF-G C-terminal domain-like"/>
    <property type="match status" value="2"/>
</dbReference>
<dbReference type="SUPFAM" id="SSF52540">
    <property type="entry name" value="P-loop containing nucleoside triphosphate hydrolases"/>
    <property type="match status" value="1"/>
</dbReference>
<dbReference type="PROSITE" id="PS00301">
    <property type="entry name" value="G_TR_1"/>
    <property type="match status" value="1"/>
</dbReference>
<dbReference type="PROSITE" id="PS51722">
    <property type="entry name" value="G_TR_2"/>
    <property type="match status" value="1"/>
</dbReference>
<keyword id="KW-0997">Cell inner membrane</keyword>
<keyword id="KW-1003">Cell membrane</keyword>
<keyword id="KW-0342">GTP-binding</keyword>
<keyword id="KW-0378">Hydrolase</keyword>
<keyword id="KW-0472">Membrane</keyword>
<keyword id="KW-0547">Nucleotide-binding</keyword>
<keyword id="KW-0648">Protein biosynthesis</keyword>
<keyword id="KW-1185">Reference proteome</keyword>
<evidence type="ECO:0000255" key="1">
    <source>
        <dbReference type="HAMAP-Rule" id="MF_00071"/>
    </source>
</evidence>
<comment type="function">
    <text evidence="1">Required for accurate and efficient protein synthesis under certain stress conditions. May act as a fidelity factor of the translation reaction, by catalyzing a one-codon backward translocation of tRNAs on improperly translocated ribosomes. Back-translocation proceeds from a post-translocation (POST) complex to a pre-translocation (PRE) complex, thus giving elongation factor G a second chance to translocate the tRNAs correctly. Binds to ribosomes in a GTP-dependent manner.</text>
</comment>
<comment type="catalytic activity">
    <reaction evidence="1">
        <text>GTP + H2O = GDP + phosphate + H(+)</text>
        <dbReference type="Rhea" id="RHEA:19669"/>
        <dbReference type="ChEBI" id="CHEBI:15377"/>
        <dbReference type="ChEBI" id="CHEBI:15378"/>
        <dbReference type="ChEBI" id="CHEBI:37565"/>
        <dbReference type="ChEBI" id="CHEBI:43474"/>
        <dbReference type="ChEBI" id="CHEBI:58189"/>
        <dbReference type="EC" id="3.6.5.n1"/>
    </reaction>
</comment>
<comment type="subcellular location">
    <subcellularLocation>
        <location evidence="1">Cell inner membrane</location>
        <topology evidence="1">Peripheral membrane protein</topology>
        <orientation evidence="1">Cytoplasmic side</orientation>
    </subcellularLocation>
</comment>
<comment type="similarity">
    <text evidence="1">Belongs to the TRAFAC class translation factor GTPase superfamily. Classic translation factor GTPase family. LepA subfamily.</text>
</comment>
<accession>Q8RFD1</accession>